<geneLocation type="chloroplast"/>
<dbReference type="EMBL" id="AP005672">
    <property type="protein sequence ID" value="BAC85039.1"/>
    <property type="molecule type" value="Genomic_DNA"/>
</dbReference>
<dbReference type="RefSeq" id="NP_904189.1">
    <property type="nucleotide sequence ID" value="NC_005087.2"/>
</dbReference>
<dbReference type="SMR" id="Q6YXL3"/>
<dbReference type="FunCoup" id="Q6YXL3">
    <property type="interactions" value="514"/>
</dbReference>
<dbReference type="STRING" id="3218.Q6YXL3"/>
<dbReference type="GeneID" id="2546820"/>
<dbReference type="KEGG" id="ppp:2546820"/>
<dbReference type="InParanoid" id="Q6YXL3"/>
<dbReference type="OrthoDB" id="415867at2759"/>
<dbReference type="Proteomes" id="UP000006727">
    <property type="component" value="Chloroplast"/>
</dbReference>
<dbReference type="GO" id="GO:0009535">
    <property type="term" value="C:chloroplast thylakoid membrane"/>
    <property type="evidence" value="ECO:0007669"/>
    <property type="project" value="UniProtKB-SubCell"/>
</dbReference>
<dbReference type="GO" id="GO:0009055">
    <property type="term" value="F:electron transfer activity"/>
    <property type="evidence" value="ECO:0007669"/>
    <property type="project" value="UniProtKB-UniRule"/>
</dbReference>
<dbReference type="GO" id="GO:0020037">
    <property type="term" value="F:heme binding"/>
    <property type="evidence" value="ECO:0007669"/>
    <property type="project" value="InterPro"/>
</dbReference>
<dbReference type="GO" id="GO:0005506">
    <property type="term" value="F:iron ion binding"/>
    <property type="evidence" value="ECO:0007669"/>
    <property type="project" value="InterPro"/>
</dbReference>
<dbReference type="GO" id="GO:0015979">
    <property type="term" value="P:photosynthesis"/>
    <property type="evidence" value="ECO:0007669"/>
    <property type="project" value="UniProtKB-UniRule"/>
</dbReference>
<dbReference type="FunFam" id="1.20.5.700:FF:000001">
    <property type="entry name" value="Cytochrome f"/>
    <property type="match status" value="1"/>
</dbReference>
<dbReference type="FunFam" id="2.40.50.100:FF:000007">
    <property type="entry name" value="Cytochrome f"/>
    <property type="match status" value="1"/>
</dbReference>
<dbReference type="FunFam" id="2.60.40.830:FF:000001">
    <property type="entry name" value="Cytochrome f"/>
    <property type="match status" value="1"/>
</dbReference>
<dbReference type="Gene3D" id="2.40.50.100">
    <property type="match status" value="1"/>
</dbReference>
<dbReference type="Gene3D" id="2.60.40.830">
    <property type="entry name" value="Cytochrome f large domain"/>
    <property type="match status" value="1"/>
</dbReference>
<dbReference type="Gene3D" id="1.20.5.700">
    <property type="entry name" value="Single helix bin"/>
    <property type="match status" value="1"/>
</dbReference>
<dbReference type="HAMAP" id="MF_00610">
    <property type="entry name" value="Cytb6_f_cytF"/>
    <property type="match status" value="1"/>
</dbReference>
<dbReference type="InterPro" id="IPR024058">
    <property type="entry name" value="Cyt-f_TM"/>
</dbReference>
<dbReference type="InterPro" id="IPR002325">
    <property type="entry name" value="Cyt_f"/>
</dbReference>
<dbReference type="InterPro" id="IPR024094">
    <property type="entry name" value="Cyt_f_lg_dom"/>
</dbReference>
<dbReference type="InterPro" id="IPR036826">
    <property type="entry name" value="Cyt_f_lg_dom_sf"/>
</dbReference>
<dbReference type="InterPro" id="IPR011054">
    <property type="entry name" value="Rudment_hybrid_motif"/>
</dbReference>
<dbReference type="PANTHER" id="PTHR33288">
    <property type="match status" value="1"/>
</dbReference>
<dbReference type="PANTHER" id="PTHR33288:SF10">
    <property type="entry name" value="CYTOCHROME F"/>
    <property type="match status" value="1"/>
</dbReference>
<dbReference type="Pfam" id="PF01333">
    <property type="entry name" value="Apocytochr_F_C"/>
    <property type="match status" value="1"/>
</dbReference>
<dbReference type="Pfam" id="PF16639">
    <property type="entry name" value="Apocytochr_F_N"/>
    <property type="match status" value="1"/>
</dbReference>
<dbReference type="PRINTS" id="PR00610">
    <property type="entry name" value="CYTOCHROMEF"/>
</dbReference>
<dbReference type="SUPFAM" id="SSF103431">
    <property type="entry name" value="Cytochrome f subunit of the cytochrome b6f complex, transmembrane anchor"/>
    <property type="match status" value="1"/>
</dbReference>
<dbReference type="SUPFAM" id="SSF49441">
    <property type="entry name" value="Cytochrome f, large domain"/>
    <property type="match status" value="1"/>
</dbReference>
<dbReference type="SUPFAM" id="SSF51246">
    <property type="entry name" value="Rudiment single hybrid motif"/>
    <property type="match status" value="1"/>
</dbReference>
<dbReference type="PROSITE" id="PS51010">
    <property type="entry name" value="CYTF"/>
    <property type="match status" value="1"/>
</dbReference>
<name>CYF_PHYPA</name>
<accession>Q6YXL3</accession>
<proteinExistence type="inferred from homology"/>
<comment type="function">
    <text evidence="2">Component of the cytochrome b6-f complex, which mediates electron transfer between photosystem II (PSII) and photosystem I (PSI), cyclic electron flow around PSI, and state transitions.</text>
</comment>
<comment type="cofactor">
    <cofactor evidence="2">
        <name>heme</name>
        <dbReference type="ChEBI" id="CHEBI:30413"/>
    </cofactor>
    <text evidence="2">Binds 1 heme group covalently.</text>
</comment>
<comment type="subunit">
    <text evidence="1">The 4 large subunits of the cytochrome b6-f complex are cytochrome b6, subunit IV (17 kDa polypeptide, petD), cytochrome f and the Rieske protein, while the 4 small subunits are PetG, PetL, PetM and PetN. The complex functions as a dimer (By similarity).</text>
</comment>
<comment type="subcellular location">
    <subcellularLocation>
        <location evidence="2">Plastid</location>
        <location evidence="2">Chloroplast thylakoid membrane</location>
        <topology evidence="2">Single-pass membrane protein</topology>
    </subcellularLocation>
</comment>
<comment type="similarity">
    <text evidence="2">Belongs to the cytochrome f family.</text>
</comment>
<evidence type="ECO:0000250" key="1"/>
<evidence type="ECO:0000255" key="2">
    <source>
        <dbReference type="HAMAP-Rule" id="MF_00610"/>
    </source>
</evidence>
<protein>
    <recommendedName>
        <fullName evidence="2">Cytochrome f</fullName>
    </recommendedName>
</protein>
<feature type="signal peptide" evidence="2">
    <location>
        <begin position="1"/>
        <end position="35"/>
    </location>
</feature>
<feature type="chain" id="PRO_0000023829" description="Cytochrome f">
    <location>
        <begin position="36"/>
        <end position="319"/>
    </location>
</feature>
<feature type="transmembrane region" description="Helical" evidence="2">
    <location>
        <begin position="285"/>
        <end position="305"/>
    </location>
</feature>
<feature type="binding site" description="axial binding residue" evidence="2">
    <location>
        <position position="36"/>
    </location>
    <ligand>
        <name>heme</name>
        <dbReference type="ChEBI" id="CHEBI:30413"/>
    </ligand>
    <ligandPart>
        <name>Fe</name>
        <dbReference type="ChEBI" id="CHEBI:18248"/>
    </ligandPart>
</feature>
<feature type="binding site" description="covalent" evidence="2">
    <location>
        <position position="56"/>
    </location>
    <ligand>
        <name>heme</name>
        <dbReference type="ChEBI" id="CHEBI:30413"/>
    </ligand>
</feature>
<feature type="binding site" description="covalent" evidence="2">
    <location>
        <position position="59"/>
    </location>
    <ligand>
        <name>heme</name>
        <dbReference type="ChEBI" id="CHEBI:30413"/>
    </ligand>
</feature>
<feature type="binding site" description="axial binding residue" evidence="2">
    <location>
        <position position="60"/>
    </location>
    <ligand>
        <name>heme</name>
        <dbReference type="ChEBI" id="CHEBI:30413"/>
    </ligand>
    <ligandPart>
        <name>Fe</name>
        <dbReference type="ChEBI" id="CHEBI:18248"/>
    </ligandPart>
</feature>
<organism>
    <name type="scientific">Physcomitrium patens</name>
    <name type="common">Spreading-leaved earth moss</name>
    <name type="synonym">Physcomitrella patens</name>
    <dbReference type="NCBI Taxonomy" id="3218"/>
    <lineage>
        <taxon>Eukaryota</taxon>
        <taxon>Viridiplantae</taxon>
        <taxon>Streptophyta</taxon>
        <taxon>Embryophyta</taxon>
        <taxon>Bryophyta</taxon>
        <taxon>Bryophytina</taxon>
        <taxon>Bryopsida</taxon>
        <taxon>Funariidae</taxon>
        <taxon>Funariales</taxon>
        <taxon>Funariaceae</taxon>
        <taxon>Physcomitrium</taxon>
    </lineage>
</organism>
<keyword id="KW-0150">Chloroplast</keyword>
<keyword id="KW-0249">Electron transport</keyword>
<keyword id="KW-0349">Heme</keyword>
<keyword id="KW-0408">Iron</keyword>
<keyword id="KW-0472">Membrane</keyword>
<keyword id="KW-0479">Metal-binding</keyword>
<keyword id="KW-0602">Photosynthesis</keyword>
<keyword id="KW-0934">Plastid</keyword>
<keyword id="KW-1185">Reference proteome</keyword>
<keyword id="KW-0732">Signal</keyword>
<keyword id="KW-0793">Thylakoid</keyword>
<keyword id="KW-0812">Transmembrane</keyword>
<keyword id="KW-1133">Transmembrane helix</keyword>
<keyword id="KW-0813">Transport</keyword>
<sequence>MQNRNISYWIKKCVIQSISIVILMKIIAWPSISEAYPIFAQQAYEDPREATGRIVCANCHLAKKPVDIEVPQSVLPDTVFEAVVKIPYDMQIKQVLANGKKGALNVGAVLILPKGFELAPADRIPPEMKEKIGNLYFQPYSSDKKNILVIGPVPGKKYSEMVFPILSPDPAVNKEANFLKYPIYLGANRGRGQIYPDGSKSNNTVYNASAAGTVSKIFRKEKGGYEITIDTQDGRQIVDIVPAGPELIISEGELIKADQPLTNNPNVGGFGQGDAEIVLQDPLRVQSLLVFFVSVTLAQIFLVLKKKQFEKVQLAEMNF</sequence>
<reference key="1">
    <citation type="journal article" date="2003" name="Nucleic Acids Res.">
        <title>Complete chloroplast DNA sequence of the moss Physcomitrella patens: evidence for the loss and relocation of rpoA from the chloroplast to the nucleus.</title>
        <authorList>
            <person name="Sugiura C."/>
            <person name="Kobayashi Y."/>
            <person name="Setsuyuki A."/>
            <person name="Sugita C."/>
            <person name="Sugita M."/>
        </authorList>
    </citation>
    <scope>NUCLEOTIDE SEQUENCE [LARGE SCALE GENOMIC DNA]</scope>
    <source>
        <strain>cv. Gransden 2004</strain>
    </source>
</reference>
<gene>
    <name evidence="2" type="primary">petA</name>
</gene>